<organism>
    <name type="scientific">Macaca mulatta</name>
    <name type="common">Rhesus macaque</name>
    <dbReference type="NCBI Taxonomy" id="9544"/>
    <lineage>
        <taxon>Eukaryota</taxon>
        <taxon>Metazoa</taxon>
        <taxon>Chordata</taxon>
        <taxon>Craniata</taxon>
        <taxon>Vertebrata</taxon>
        <taxon>Euteleostomi</taxon>
        <taxon>Mammalia</taxon>
        <taxon>Eutheria</taxon>
        <taxon>Euarchontoglires</taxon>
        <taxon>Primates</taxon>
        <taxon>Haplorrhini</taxon>
        <taxon>Catarrhini</taxon>
        <taxon>Cercopithecidae</taxon>
        <taxon>Cercopithecinae</taxon>
        <taxon>Macaca</taxon>
    </lineage>
</organism>
<keyword id="KW-1015">Disulfide bond</keyword>
<keyword id="KW-0646">Protease inhibitor</keyword>
<keyword id="KW-1185">Reference proteome</keyword>
<keyword id="KW-0677">Repeat</keyword>
<keyword id="KW-0964">Secreted</keyword>
<keyword id="KW-0722">Serine protease inhibitor</keyword>
<keyword id="KW-0732">Signal</keyword>
<protein>
    <recommendedName>
        <fullName>WAP four-disulfide core domain protein 5</fullName>
    </recommendedName>
</protein>
<reference key="1">
    <citation type="journal article" date="2007" name="Genome Res.">
        <title>Comparative sequence analyses reveal rapid and divergent evolutionary changes of the WFDC locus in the primate lineage.</title>
        <authorList>
            <consortium name="NISC comparative sequencing program"/>
            <person name="Hurle B."/>
            <person name="Swanson W."/>
            <person name="Green E.D."/>
        </authorList>
    </citation>
    <scope>NUCLEOTIDE SEQUENCE [GENOMIC DNA]</scope>
</reference>
<feature type="signal peptide" evidence="2">
    <location>
        <begin position="1"/>
        <end position="24"/>
    </location>
</feature>
<feature type="chain" id="PRO_0000289639" description="WAP four-disulfide core domain protein 5">
    <location>
        <begin position="25"/>
        <end position="123"/>
    </location>
</feature>
<feature type="domain" description="WAP 1" evidence="3">
    <location>
        <begin position="27"/>
        <end position="73"/>
    </location>
</feature>
<feature type="domain" description="WAP 2" evidence="3">
    <location>
        <begin position="74"/>
        <end position="121"/>
    </location>
</feature>
<feature type="disulfide bond" evidence="3">
    <location>
        <begin position="34"/>
        <end position="62"/>
    </location>
</feature>
<feature type="disulfide bond" evidence="3">
    <location>
        <begin position="41"/>
        <end position="66"/>
    </location>
</feature>
<feature type="disulfide bond" evidence="3">
    <location>
        <begin position="49"/>
        <end position="61"/>
    </location>
</feature>
<feature type="disulfide bond" evidence="3">
    <location>
        <begin position="55"/>
        <end position="70"/>
    </location>
</feature>
<feature type="disulfide bond" evidence="3">
    <location>
        <begin position="81"/>
        <end position="109"/>
    </location>
</feature>
<feature type="disulfide bond" evidence="3">
    <location>
        <begin position="88"/>
        <end position="113"/>
    </location>
</feature>
<feature type="disulfide bond" evidence="3">
    <location>
        <begin position="96"/>
        <end position="108"/>
    </location>
</feature>
<feature type="disulfide bond" evidence="3">
    <location>
        <begin position="102"/>
        <end position="117"/>
    </location>
</feature>
<evidence type="ECO:0000250" key="1"/>
<evidence type="ECO:0000255" key="2"/>
<evidence type="ECO:0000255" key="3">
    <source>
        <dbReference type="PROSITE-ProRule" id="PRU00722"/>
    </source>
</evidence>
<evidence type="ECO:0000305" key="4"/>
<dbReference type="EMBL" id="DP000043">
    <property type="protein sequence ID" value="ABO52967.1"/>
    <property type="molecule type" value="Genomic_DNA"/>
</dbReference>
<dbReference type="RefSeq" id="NP_001162157.1">
    <property type="nucleotide sequence ID" value="NM_001168686.1"/>
</dbReference>
<dbReference type="SMR" id="A4K2T2"/>
<dbReference type="STRING" id="9544.ENSMMUP00000017363"/>
<dbReference type="PaxDb" id="9544-ENSMMUP00000017363"/>
<dbReference type="Ensembl" id="ENSMMUT00000018539.4">
    <property type="protein sequence ID" value="ENSMMUP00000017363.4"/>
    <property type="gene ID" value="ENSMMUG00000013216.4"/>
</dbReference>
<dbReference type="GeneID" id="711627"/>
<dbReference type="KEGG" id="mcc:711627"/>
<dbReference type="CTD" id="149708"/>
<dbReference type="VEuPathDB" id="HostDB:ENSMMUG00000013216"/>
<dbReference type="VGNC" id="VGNC:108079">
    <property type="gene designation" value="WFDC5"/>
</dbReference>
<dbReference type="eggNOG" id="ENOG502S99V">
    <property type="taxonomic scope" value="Eukaryota"/>
</dbReference>
<dbReference type="GeneTree" id="ENSGT00730000111369"/>
<dbReference type="HOGENOM" id="CLU_105901_2_0_1"/>
<dbReference type="InParanoid" id="A4K2T2"/>
<dbReference type="OMA" id="GCPPDDK"/>
<dbReference type="OrthoDB" id="4473401at2759"/>
<dbReference type="TreeFam" id="TF338375"/>
<dbReference type="Proteomes" id="UP000006718">
    <property type="component" value="Chromosome 10"/>
</dbReference>
<dbReference type="Bgee" id="ENSMMUG00000013216">
    <property type="expression patterns" value="Expressed in fibroblast and 3 other cell types or tissues"/>
</dbReference>
<dbReference type="ExpressionAtlas" id="A4K2T2">
    <property type="expression patterns" value="baseline"/>
</dbReference>
<dbReference type="GO" id="GO:0005615">
    <property type="term" value="C:extracellular space"/>
    <property type="evidence" value="ECO:0000318"/>
    <property type="project" value="GO_Central"/>
</dbReference>
<dbReference type="GO" id="GO:0004867">
    <property type="term" value="F:serine-type endopeptidase inhibitor activity"/>
    <property type="evidence" value="ECO:0000318"/>
    <property type="project" value="GO_Central"/>
</dbReference>
<dbReference type="GO" id="GO:0019731">
    <property type="term" value="P:antibacterial humoral response"/>
    <property type="evidence" value="ECO:0000318"/>
    <property type="project" value="GO_Central"/>
</dbReference>
<dbReference type="GO" id="GO:0045087">
    <property type="term" value="P:innate immune response"/>
    <property type="evidence" value="ECO:0000318"/>
    <property type="project" value="GO_Central"/>
</dbReference>
<dbReference type="FunFam" id="4.10.75.10:FF:000001">
    <property type="entry name" value="Anosmin 1"/>
    <property type="match status" value="1"/>
</dbReference>
<dbReference type="Gene3D" id="4.10.75.10">
    <property type="entry name" value="Elafin-like"/>
    <property type="match status" value="2"/>
</dbReference>
<dbReference type="InterPro" id="IPR036645">
    <property type="entry name" value="Elafin-like_sf"/>
</dbReference>
<dbReference type="InterPro" id="IPR008197">
    <property type="entry name" value="WAP_dom"/>
</dbReference>
<dbReference type="InterPro" id="IPR050514">
    <property type="entry name" value="WAP_four-disulfide_core"/>
</dbReference>
<dbReference type="PANTHER" id="PTHR19441:SF39">
    <property type="entry name" value="WAP FOUR-DISULFIDE CORE DOMAIN PROTEIN 5"/>
    <property type="match status" value="1"/>
</dbReference>
<dbReference type="PANTHER" id="PTHR19441">
    <property type="entry name" value="WHEY ACDIC PROTEIN WAP"/>
    <property type="match status" value="1"/>
</dbReference>
<dbReference type="Pfam" id="PF00095">
    <property type="entry name" value="WAP"/>
    <property type="match status" value="2"/>
</dbReference>
<dbReference type="PRINTS" id="PR00003">
    <property type="entry name" value="4DISULPHCORE"/>
</dbReference>
<dbReference type="SMART" id="SM00217">
    <property type="entry name" value="WAP"/>
    <property type="match status" value="2"/>
</dbReference>
<dbReference type="SUPFAM" id="SSF57256">
    <property type="entry name" value="Elafin-like"/>
    <property type="match status" value="2"/>
</dbReference>
<dbReference type="PROSITE" id="PS51390">
    <property type="entry name" value="WAP"/>
    <property type="match status" value="2"/>
</dbReference>
<sequence length="123" mass="13395">MRIQSLLLLGALLAVGSQLPAVFGRKKGEKWGGCPADDGPCLLSVPDQCVEDSQCPLTRKCCYRACFRQCIPRVSVKPGSCPQDQLRCLSPMNHLCHKDSDCSGKKRCCHSACGRDCRDPARG</sequence>
<name>WFDC5_MACMU</name>
<accession>A4K2T2</accession>
<proteinExistence type="inferred from homology"/>
<gene>
    <name type="primary">WFDC5</name>
</gene>
<comment type="function">
    <text evidence="1">Putative acid-stable proteinase inhibitor.</text>
</comment>
<comment type="subcellular location">
    <subcellularLocation>
        <location evidence="4">Secreted</location>
    </subcellularLocation>
</comment>